<sequence>MCEEYTKEKIMEIRKKHIGPSCKVFFANDPIKIVHAKGQYMFDEKGERYLDCINNVAHVGHSHPEVTKAALKQMELLNTNSRFLHDNLVRYAECLISTLPEKLSVCYFVNSGSEANDLALRLARQYTGHQDVITLDHAYHGHVTSLIDISPYKFHQLGKDAQKEYIHVAPSPDTYRGKYREDHPDPASAYAKDVEDIIQKAHQNKRQIAAFIAESMQSCGGQIIPPAGYFQKVSEFVHKAGGVFIADEVQVGFGRVGKHFWSFQLQGEDFLPDIVTMGKPIGNGHPMSCVVTTKEIAEAFGATGMEYFNTFGGNPVSCAIGLAVLDIIEKEDLRGNATTVGNYLTELLNEQKQKHPLIGDIRGVGLFVGVDLVKDRLFRTPATAEAQHIIYKLKEKRILLSADGPYRNVLKFKPPMCFNKEDAKLVVDEIDQCLTALEKAIGIQSNAGLHEKTSAKRKVHNENSGDTNAKEKETCSSNSQERNPNDHAYRQSNGLHPESPTFTRKRIRT</sequence>
<evidence type="ECO:0000250" key="1"/>
<evidence type="ECO:0000250" key="2">
    <source>
        <dbReference type="UniProtKB" id="Q8TBG4"/>
    </source>
</evidence>
<evidence type="ECO:0000256" key="3">
    <source>
        <dbReference type="SAM" id="MobiDB-lite"/>
    </source>
</evidence>
<evidence type="ECO:0000305" key="4"/>
<dbReference type="EC" id="4.2.3.2"/>
<dbReference type="EMBL" id="BC077219">
    <property type="protein sequence ID" value="AAH77219.1"/>
    <property type="molecule type" value="mRNA"/>
</dbReference>
<dbReference type="RefSeq" id="NP_001086637.1">
    <property type="nucleotide sequence ID" value="NM_001093168.1"/>
</dbReference>
<dbReference type="SMR" id="Q6DEB1"/>
<dbReference type="GeneID" id="446472"/>
<dbReference type="KEGG" id="xla:446472"/>
<dbReference type="AGR" id="Xenbase:XB-GENE-6256217"/>
<dbReference type="CTD" id="446472"/>
<dbReference type="Xenbase" id="XB-GENE-6256217">
    <property type="gene designation" value="etnppl.L"/>
</dbReference>
<dbReference type="OMA" id="GAIETMK"/>
<dbReference type="OrthoDB" id="10261433at2759"/>
<dbReference type="Proteomes" id="UP000186698">
    <property type="component" value="Chromosome 1L"/>
</dbReference>
<dbReference type="Bgee" id="446472">
    <property type="expression patterns" value="Expressed in intestine and 16 other cell types or tissues"/>
</dbReference>
<dbReference type="GO" id="GO:0005739">
    <property type="term" value="C:mitochondrion"/>
    <property type="evidence" value="ECO:0007669"/>
    <property type="project" value="UniProtKB-SubCell"/>
</dbReference>
<dbReference type="GO" id="GO:0050459">
    <property type="term" value="F:ethanolamine-phosphate phospho-lyase activity"/>
    <property type="evidence" value="ECO:0000318"/>
    <property type="project" value="GO_Central"/>
</dbReference>
<dbReference type="GO" id="GO:0030170">
    <property type="term" value="F:pyridoxal phosphate binding"/>
    <property type="evidence" value="ECO:0007669"/>
    <property type="project" value="InterPro"/>
</dbReference>
<dbReference type="GO" id="GO:0008483">
    <property type="term" value="F:transaminase activity"/>
    <property type="evidence" value="ECO:0007669"/>
    <property type="project" value="InterPro"/>
</dbReference>
<dbReference type="CDD" id="cd00610">
    <property type="entry name" value="OAT_like"/>
    <property type="match status" value="1"/>
</dbReference>
<dbReference type="FunFam" id="3.40.640.10:FF:000058">
    <property type="entry name" value="ethanolamine-phosphate phospho-lyase isoform X1"/>
    <property type="match status" value="1"/>
</dbReference>
<dbReference type="Gene3D" id="3.90.1150.10">
    <property type="entry name" value="Aspartate Aminotransferase, domain 1"/>
    <property type="match status" value="1"/>
</dbReference>
<dbReference type="Gene3D" id="3.40.640.10">
    <property type="entry name" value="Type I PLP-dependent aspartate aminotransferase-like (Major domain)"/>
    <property type="match status" value="1"/>
</dbReference>
<dbReference type="InterPro" id="IPR005814">
    <property type="entry name" value="Aminotrans_3"/>
</dbReference>
<dbReference type="InterPro" id="IPR049704">
    <property type="entry name" value="Aminotrans_3_PPA_site"/>
</dbReference>
<dbReference type="InterPro" id="IPR015424">
    <property type="entry name" value="PyrdxlP-dep_Trfase"/>
</dbReference>
<dbReference type="InterPro" id="IPR015421">
    <property type="entry name" value="PyrdxlP-dep_Trfase_major"/>
</dbReference>
<dbReference type="InterPro" id="IPR015422">
    <property type="entry name" value="PyrdxlP-dep_Trfase_small"/>
</dbReference>
<dbReference type="PANTHER" id="PTHR45688">
    <property type="match status" value="1"/>
</dbReference>
<dbReference type="PANTHER" id="PTHR45688:SF1">
    <property type="entry name" value="ETHANOLAMINE-PHOSPHATE PHOSPHO-LYASE"/>
    <property type="match status" value="1"/>
</dbReference>
<dbReference type="Pfam" id="PF00202">
    <property type="entry name" value="Aminotran_3"/>
    <property type="match status" value="1"/>
</dbReference>
<dbReference type="SUPFAM" id="SSF53383">
    <property type="entry name" value="PLP-dependent transferases"/>
    <property type="match status" value="1"/>
</dbReference>
<dbReference type="PROSITE" id="PS00600">
    <property type="entry name" value="AA_TRANSFER_CLASS_3"/>
    <property type="match status" value="1"/>
</dbReference>
<gene>
    <name type="primary">etnppl</name>
    <name type="synonym">agxt2l1</name>
</gene>
<feature type="chain" id="PRO_0000287666" description="Ethanolamine-phosphate phospho-lyase">
    <location>
        <begin position="1"/>
        <end position="509"/>
    </location>
</feature>
<feature type="region of interest" description="Disordered" evidence="3">
    <location>
        <begin position="451"/>
        <end position="509"/>
    </location>
</feature>
<feature type="compositionally biased region" description="Basic and acidic residues" evidence="3">
    <location>
        <begin position="451"/>
        <end position="474"/>
    </location>
</feature>
<feature type="modified residue" description="N6-(pyridoxal phosphate)lysine" evidence="1">
    <location>
        <position position="279"/>
    </location>
</feature>
<protein>
    <recommendedName>
        <fullName>Ethanolamine-phosphate phospho-lyase</fullName>
        <ecNumber>4.2.3.2</ecNumber>
    </recommendedName>
    <alternativeName>
        <fullName>Alanine--glyoxylate aminotransferase 2-like 1</fullName>
    </alternativeName>
</protein>
<comment type="function">
    <text evidence="1">Catalyzes the pyridoxal-phosphate-dependent breakdown of phosphoethanolamine, converting it to ammonia, inorganic phosphate and acetaldehyde.</text>
</comment>
<comment type="catalytic activity">
    <reaction>
        <text>phosphoethanolamine + H2O = acetaldehyde + NH4(+) + phosphate</text>
        <dbReference type="Rhea" id="RHEA:17889"/>
        <dbReference type="ChEBI" id="CHEBI:15343"/>
        <dbReference type="ChEBI" id="CHEBI:15377"/>
        <dbReference type="ChEBI" id="CHEBI:28938"/>
        <dbReference type="ChEBI" id="CHEBI:43474"/>
        <dbReference type="ChEBI" id="CHEBI:58190"/>
        <dbReference type="EC" id="4.2.3.2"/>
    </reaction>
</comment>
<comment type="cofactor">
    <cofactor evidence="1">
        <name>pyridoxal 5'-phosphate</name>
        <dbReference type="ChEBI" id="CHEBI:597326"/>
    </cofactor>
</comment>
<comment type="subunit">
    <text evidence="1">Homotetramer.</text>
</comment>
<comment type="subcellular location">
    <subcellularLocation>
        <location evidence="4">Mitochondrion</location>
    </subcellularLocation>
</comment>
<comment type="similarity">
    <text evidence="4">Belongs to the class-III pyridoxal-phosphate-dependent aminotransferase family.</text>
</comment>
<comment type="caution">
    <text evidence="2">Does not seem to possess aminotransferase activity.</text>
</comment>
<organism>
    <name type="scientific">Xenopus laevis</name>
    <name type="common">African clawed frog</name>
    <dbReference type="NCBI Taxonomy" id="8355"/>
    <lineage>
        <taxon>Eukaryota</taxon>
        <taxon>Metazoa</taxon>
        <taxon>Chordata</taxon>
        <taxon>Craniata</taxon>
        <taxon>Vertebrata</taxon>
        <taxon>Euteleostomi</taxon>
        <taxon>Amphibia</taxon>
        <taxon>Batrachia</taxon>
        <taxon>Anura</taxon>
        <taxon>Pipoidea</taxon>
        <taxon>Pipidae</taxon>
        <taxon>Xenopodinae</taxon>
        <taxon>Xenopus</taxon>
        <taxon>Xenopus</taxon>
    </lineage>
</organism>
<proteinExistence type="evidence at transcript level"/>
<keyword id="KW-0456">Lyase</keyword>
<keyword id="KW-0496">Mitochondrion</keyword>
<keyword id="KW-0663">Pyridoxal phosphate</keyword>
<keyword id="KW-1185">Reference proteome</keyword>
<accession>Q6DEB1</accession>
<name>AT2L1_XENLA</name>
<reference key="1">
    <citation type="submission" date="2004-07" db="EMBL/GenBank/DDBJ databases">
        <authorList>
            <consortium name="NIH - Xenopus Gene Collection (XGC) project"/>
        </authorList>
    </citation>
    <scope>NUCLEOTIDE SEQUENCE [LARGE SCALE MRNA]</scope>
    <source>
        <tissue>Heart</tissue>
    </source>
</reference>